<organism>
    <name type="scientific">Chara vulgaris</name>
    <name type="common">Common stonewort</name>
    <dbReference type="NCBI Taxonomy" id="55564"/>
    <lineage>
        <taxon>Eukaryota</taxon>
        <taxon>Viridiplantae</taxon>
        <taxon>Streptophyta</taxon>
        <taxon>Charophyceae</taxon>
        <taxon>Charales</taxon>
        <taxon>Characeae</taxon>
        <taxon>Chara</taxon>
    </lineage>
</organism>
<accession>Q1ACL3</accession>
<evidence type="ECO:0000255" key="1">
    <source>
        <dbReference type="HAMAP-Rule" id="MF_00482"/>
    </source>
</evidence>
<keyword id="KW-0004">4Fe-4S</keyword>
<keyword id="KW-0148">Chlorophyll</keyword>
<keyword id="KW-0150">Chloroplast</keyword>
<keyword id="KW-0157">Chromophore</keyword>
<keyword id="KW-0249">Electron transport</keyword>
<keyword id="KW-0408">Iron</keyword>
<keyword id="KW-0411">Iron-sulfur</keyword>
<keyword id="KW-0460">Magnesium</keyword>
<keyword id="KW-0472">Membrane</keyword>
<keyword id="KW-0479">Metal-binding</keyword>
<keyword id="KW-0560">Oxidoreductase</keyword>
<keyword id="KW-0602">Photosynthesis</keyword>
<keyword id="KW-0603">Photosystem I</keyword>
<keyword id="KW-0934">Plastid</keyword>
<keyword id="KW-0793">Thylakoid</keyword>
<keyword id="KW-0812">Transmembrane</keyword>
<keyword id="KW-1133">Transmembrane helix</keyword>
<keyword id="KW-0813">Transport</keyword>
<proteinExistence type="inferred from homology"/>
<feature type="chain" id="PRO_0000277107" description="Photosystem I P700 chlorophyll a apoprotein A2">
    <location>
        <begin position="1"/>
        <end position="734"/>
    </location>
</feature>
<feature type="transmembrane region" description="Helical; Name=I" evidence="1">
    <location>
        <begin position="46"/>
        <end position="69"/>
    </location>
</feature>
<feature type="transmembrane region" description="Helical; Name=II" evidence="1">
    <location>
        <begin position="135"/>
        <end position="158"/>
    </location>
</feature>
<feature type="transmembrane region" description="Helical; Name=III" evidence="1">
    <location>
        <begin position="175"/>
        <end position="199"/>
    </location>
</feature>
<feature type="transmembrane region" description="Helical; Name=IV" evidence="1">
    <location>
        <begin position="273"/>
        <end position="291"/>
    </location>
</feature>
<feature type="transmembrane region" description="Helical; Name=V" evidence="1">
    <location>
        <begin position="330"/>
        <end position="353"/>
    </location>
</feature>
<feature type="transmembrane region" description="Helical; Name=VI" evidence="1">
    <location>
        <begin position="369"/>
        <end position="395"/>
    </location>
</feature>
<feature type="transmembrane region" description="Helical; Name=VII" evidence="1">
    <location>
        <begin position="417"/>
        <end position="439"/>
    </location>
</feature>
<feature type="transmembrane region" description="Helical; Name=VIII" evidence="1">
    <location>
        <begin position="517"/>
        <end position="535"/>
    </location>
</feature>
<feature type="transmembrane region" description="Helical; Name=IX" evidence="1">
    <location>
        <begin position="575"/>
        <end position="596"/>
    </location>
</feature>
<feature type="transmembrane region" description="Helical; Name=X" evidence="1">
    <location>
        <begin position="643"/>
        <end position="665"/>
    </location>
</feature>
<feature type="transmembrane region" description="Helical; Name=XI" evidence="1">
    <location>
        <begin position="707"/>
        <end position="727"/>
    </location>
</feature>
<feature type="binding site" evidence="1">
    <location>
        <position position="559"/>
    </location>
    <ligand>
        <name>[4Fe-4S] cluster</name>
        <dbReference type="ChEBI" id="CHEBI:49883"/>
        <note>ligand shared between dimeric partners</note>
    </ligand>
</feature>
<feature type="binding site" evidence="1">
    <location>
        <position position="568"/>
    </location>
    <ligand>
        <name>[4Fe-4S] cluster</name>
        <dbReference type="ChEBI" id="CHEBI:49883"/>
        <note>ligand shared between dimeric partners</note>
    </ligand>
</feature>
<feature type="binding site" description="axial binding residue" evidence="1">
    <location>
        <position position="654"/>
    </location>
    <ligand>
        <name>chlorophyll a</name>
        <dbReference type="ChEBI" id="CHEBI:58416"/>
        <label>B1</label>
    </ligand>
    <ligandPart>
        <name>Mg</name>
        <dbReference type="ChEBI" id="CHEBI:25107"/>
    </ligandPart>
</feature>
<feature type="binding site" description="axial binding residue" evidence="1">
    <location>
        <position position="662"/>
    </location>
    <ligand>
        <name>chlorophyll a</name>
        <dbReference type="ChEBI" id="CHEBI:58416"/>
        <label>B3</label>
    </ligand>
    <ligandPart>
        <name>Mg</name>
        <dbReference type="ChEBI" id="CHEBI:25107"/>
    </ligandPart>
</feature>
<feature type="binding site" evidence="1">
    <location>
        <position position="670"/>
    </location>
    <ligand>
        <name>chlorophyll a</name>
        <dbReference type="ChEBI" id="CHEBI:58416"/>
        <label>B3</label>
    </ligand>
</feature>
<feature type="binding site" evidence="1">
    <location>
        <position position="671"/>
    </location>
    <ligand>
        <name>phylloquinone</name>
        <dbReference type="ChEBI" id="CHEBI:18067"/>
        <label>B</label>
    </ligand>
</feature>
<reference key="1">
    <citation type="journal article" date="2006" name="Mol. Biol. Evol.">
        <title>The chloroplast genome sequence of Chara vulgaris sheds new light into the closest green algal relatives of land plants.</title>
        <authorList>
            <person name="Turmel M."/>
            <person name="Otis C."/>
            <person name="Lemieux C."/>
        </authorList>
    </citation>
    <scope>NUCLEOTIDE SEQUENCE [LARGE SCALE GENOMIC DNA]</scope>
</reference>
<sequence length="734" mass="82509">MATRFPKFSQGLSKDPTTRRIWYGIATAHDFESHDGITEEKLYQKIFASHFGQLAVIFLWTSGNLFHVAWQGNFEQWVQDPLHVRPIAHAIWDPHFGQPAVEAFTRGGASGPVNIAYSGVYQWWFTIGMRTNLDLYRGALFLLFLSTLALLAGWLHLQPKWKPSVSWFKNAESRLNHHLSGLFGVSSLAWSGHLVHVAIPEARGQHVRWDNFLTSIPHPQGLQPFFTGNWSIYAQDPDSMNHLFGTSEGAGTAILTFLGGFHPQTQSLWLTDIAHHHLAIAILFIVAGHMYRTNFGIGHSIKEILEAHTPPGGRLGRGHNGLYDTLNNSLHFQLGLALASLGVITSLVAQHMYSLPAYAFIAQDFTTQAALYTHHQYIAGFIMVGAFAHGAIFFIRDYNPEENKENVLARMLEHKEAIISHLSWASLFLGFHTLGLYVHNDVMQAFGTPEKQILIEPVFAQWIQATHGKTLYGFDVLLSSNQSPALNAGANLWLPGWLDAINNGNNSLFLTIGPGDFLVHHAIALGLHTTTLILVKGALDARGSKLMPDKKEFGYSFPCDGPGRGGTCDISAWDAFYLAVFWMLNTIGWVTFYWHWKHITLWQGNVSQFNESSTYLMGWLRDYLWLNSSQLINGYNPLGMNSLSVWAWMFLFGHLIWATGFMFLISWRGYWQELIETLAWAHERTPLANLIRWKDKPVALSIVQARLVGLSHFSVGYIFTYAAFLIASTSAKFG</sequence>
<comment type="function">
    <text evidence="1">PsaA and PsaB bind P700, the primary electron donor of photosystem I (PSI), as well as the electron acceptors A0, A1 and FX. PSI is a plastocyanin-ferredoxin oxidoreductase, converting photonic excitation into a charge separation, which transfers an electron from the donor P700 chlorophyll pair to the spectroscopically characterized acceptors A0, A1, FX, FA and FB in turn. Oxidized P700 is reduced on the lumenal side of the thylakoid membrane by plastocyanin.</text>
</comment>
<comment type="catalytic activity">
    <reaction evidence="1">
        <text>reduced [plastocyanin] + hnu + oxidized [2Fe-2S]-[ferredoxin] = oxidized [plastocyanin] + reduced [2Fe-2S]-[ferredoxin]</text>
        <dbReference type="Rhea" id="RHEA:30407"/>
        <dbReference type="Rhea" id="RHEA-COMP:10000"/>
        <dbReference type="Rhea" id="RHEA-COMP:10001"/>
        <dbReference type="Rhea" id="RHEA-COMP:10039"/>
        <dbReference type="Rhea" id="RHEA-COMP:10040"/>
        <dbReference type="ChEBI" id="CHEBI:29036"/>
        <dbReference type="ChEBI" id="CHEBI:30212"/>
        <dbReference type="ChEBI" id="CHEBI:33737"/>
        <dbReference type="ChEBI" id="CHEBI:33738"/>
        <dbReference type="ChEBI" id="CHEBI:49552"/>
        <dbReference type="EC" id="1.97.1.12"/>
    </reaction>
</comment>
<comment type="cofactor">
    <text evidence="1">P700 is a chlorophyll a/chlorophyll a' dimer, A0 is one or more chlorophyll a, A1 is one or both phylloquinones and FX is a shared 4Fe-4S iron-sulfur center.</text>
</comment>
<comment type="subunit">
    <text evidence="1">The PsaA/B heterodimer binds the P700 chlorophyll special pair and subsequent electron acceptors. PSI consists of a core antenna complex that captures photons, and an electron transfer chain that converts photonic excitation into a charge separation. The eukaryotic PSI reaction center is composed of at least 11 subunits.</text>
</comment>
<comment type="subcellular location">
    <subcellularLocation>
        <location>Plastid</location>
        <location>Chloroplast thylakoid membrane</location>
        <topology>Multi-pass membrane protein</topology>
    </subcellularLocation>
</comment>
<comment type="similarity">
    <text evidence="1">Belongs to the PsaA/PsaB family.</text>
</comment>
<dbReference type="EC" id="1.97.1.12" evidence="1"/>
<dbReference type="EMBL" id="DQ229107">
    <property type="protein sequence ID" value="ABA61942.1"/>
    <property type="molecule type" value="Genomic_DNA"/>
</dbReference>
<dbReference type="RefSeq" id="YP_635734.1">
    <property type="nucleotide sequence ID" value="NC_008097.1"/>
</dbReference>
<dbReference type="SMR" id="Q1ACL3"/>
<dbReference type="GeneID" id="4100308"/>
<dbReference type="GO" id="GO:0009535">
    <property type="term" value="C:chloroplast thylakoid membrane"/>
    <property type="evidence" value="ECO:0007669"/>
    <property type="project" value="UniProtKB-SubCell"/>
</dbReference>
<dbReference type="GO" id="GO:0009522">
    <property type="term" value="C:photosystem I"/>
    <property type="evidence" value="ECO:0007669"/>
    <property type="project" value="UniProtKB-KW"/>
</dbReference>
<dbReference type="GO" id="GO:0051539">
    <property type="term" value="F:4 iron, 4 sulfur cluster binding"/>
    <property type="evidence" value="ECO:0007669"/>
    <property type="project" value="UniProtKB-KW"/>
</dbReference>
<dbReference type="GO" id="GO:0016168">
    <property type="term" value="F:chlorophyll binding"/>
    <property type="evidence" value="ECO:0007669"/>
    <property type="project" value="UniProtKB-KW"/>
</dbReference>
<dbReference type="GO" id="GO:0009055">
    <property type="term" value="F:electron transfer activity"/>
    <property type="evidence" value="ECO:0007669"/>
    <property type="project" value="UniProtKB-UniRule"/>
</dbReference>
<dbReference type="GO" id="GO:0000287">
    <property type="term" value="F:magnesium ion binding"/>
    <property type="evidence" value="ECO:0007669"/>
    <property type="project" value="UniProtKB-UniRule"/>
</dbReference>
<dbReference type="GO" id="GO:0016491">
    <property type="term" value="F:oxidoreductase activity"/>
    <property type="evidence" value="ECO:0007669"/>
    <property type="project" value="UniProtKB-KW"/>
</dbReference>
<dbReference type="GO" id="GO:0015979">
    <property type="term" value="P:photosynthesis"/>
    <property type="evidence" value="ECO:0007669"/>
    <property type="project" value="UniProtKB-UniRule"/>
</dbReference>
<dbReference type="FunFam" id="1.20.1130.10:FF:000001">
    <property type="entry name" value="Photosystem I P700 chlorophyll a apoprotein A2"/>
    <property type="match status" value="1"/>
</dbReference>
<dbReference type="Gene3D" id="1.20.1130.10">
    <property type="entry name" value="Photosystem I PsaA/PsaB"/>
    <property type="match status" value="1"/>
</dbReference>
<dbReference type="HAMAP" id="MF_00482">
    <property type="entry name" value="PSI_PsaB"/>
    <property type="match status" value="1"/>
</dbReference>
<dbReference type="InterPro" id="IPR001280">
    <property type="entry name" value="PSI_PsaA/B"/>
</dbReference>
<dbReference type="InterPro" id="IPR020586">
    <property type="entry name" value="PSI_PsaA/B_CS"/>
</dbReference>
<dbReference type="InterPro" id="IPR036408">
    <property type="entry name" value="PSI_PsaA/B_sf"/>
</dbReference>
<dbReference type="InterPro" id="IPR006244">
    <property type="entry name" value="PSI_PsaB"/>
</dbReference>
<dbReference type="NCBIfam" id="TIGR01336">
    <property type="entry name" value="psaB"/>
    <property type="match status" value="1"/>
</dbReference>
<dbReference type="PANTHER" id="PTHR30128">
    <property type="entry name" value="OUTER MEMBRANE PROTEIN, OMPA-RELATED"/>
    <property type="match status" value="1"/>
</dbReference>
<dbReference type="PANTHER" id="PTHR30128:SF19">
    <property type="entry name" value="PHOTOSYSTEM I P700 CHLOROPHYLL A APOPROTEIN A1-RELATED"/>
    <property type="match status" value="1"/>
</dbReference>
<dbReference type="Pfam" id="PF00223">
    <property type="entry name" value="PsaA_PsaB"/>
    <property type="match status" value="1"/>
</dbReference>
<dbReference type="PIRSF" id="PIRSF002905">
    <property type="entry name" value="PSI_A"/>
    <property type="match status" value="1"/>
</dbReference>
<dbReference type="PRINTS" id="PR00257">
    <property type="entry name" value="PHOTSYSPSAAB"/>
</dbReference>
<dbReference type="SUPFAM" id="SSF81558">
    <property type="entry name" value="Photosystem I subunits PsaA/PsaB"/>
    <property type="match status" value="1"/>
</dbReference>
<dbReference type="PROSITE" id="PS00419">
    <property type="entry name" value="PHOTOSYSTEM_I_PSAAB"/>
    <property type="match status" value="1"/>
</dbReference>
<gene>
    <name evidence="1" type="primary">psaB</name>
</gene>
<geneLocation type="chloroplast"/>
<name>PSAB_CHAVU</name>
<protein>
    <recommendedName>
        <fullName evidence="1">Photosystem I P700 chlorophyll a apoprotein A2</fullName>
        <ecNumber evidence="1">1.97.1.12</ecNumber>
    </recommendedName>
    <alternativeName>
        <fullName evidence="1">PSI-B</fullName>
    </alternativeName>
    <alternativeName>
        <fullName evidence="1">PsaB</fullName>
    </alternativeName>
</protein>